<protein>
    <recommendedName>
        <fullName evidence="1">Pyridoxal 5'-phosphate synthase subunit PdxS</fullName>
        <shortName evidence="1">PLP synthase subunit PdxS</shortName>
        <ecNumber evidence="1">4.3.3.6</ecNumber>
    </recommendedName>
    <alternativeName>
        <fullName evidence="1">Pdx1</fullName>
    </alternativeName>
</protein>
<proteinExistence type="inferred from homology"/>
<evidence type="ECO:0000255" key="1">
    <source>
        <dbReference type="HAMAP-Rule" id="MF_01824"/>
    </source>
</evidence>
<sequence>MTQNRAELNRNLAQMLKGGVIMDVTTPEQAKIAQDAGACAVMALERIPADIRAAGGVSRMSDPAMIKGIQEAVSIPVMAKVRIGHIAEARILQAIDIDYIDESEVLSPADDVYHIDKNQFDVPFVCGAKNLGEALRRIAEGAAMIRTKGEPGTGDVIQAVRHMRTMNKQIRELVALRDDEVYEAAKQLAVPYDLAKYVHDNGRLPVVNFAAGGVATPADAALMMELGAEGVFVGSGIFKSGDPAKRAAAIVKATANWQDADLLAKLSENLGEAMVGINEDEIQTIMAARGE</sequence>
<accession>B3DT80</accession>
<reference key="1">
    <citation type="journal article" date="2008" name="BMC Genomics">
        <title>Comparative genomic analysis of the gut bacterium Bifidobacterium longum reveals loci susceptible to deletion during pure culture growth.</title>
        <authorList>
            <person name="Lee J.H."/>
            <person name="Karamychev V.N."/>
            <person name="Kozyavkin S.A."/>
            <person name="Mills D."/>
            <person name="Pavlov A.R."/>
            <person name="Pavlova N.V."/>
            <person name="Polouchine N.N."/>
            <person name="Richardson P.M."/>
            <person name="Shakhova V.V."/>
            <person name="Slesarev A.I."/>
            <person name="Weimer B."/>
            <person name="O'Sullivan D.J."/>
        </authorList>
    </citation>
    <scope>NUCLEOTIDE SEQUENCE [LARGE SCALE GENOMIC DNA]</scope>
    <source>
        <strain>DJO10A</strain>
    </source>
</reference>
<dbReference type="EC" id="4.3.3.6" evidence="1"/>
<dbReference type="EMBL" id="CP000605">
    <property type="protein sequence ID" value="ACD98349.1"/>
    <property type="molecule type" value="Genomic_DNA"/>
</dbReference>
<dbReference type="RefSeq" id="WP_010081112.1">
    <property type="nucleotide sequence ID" value="NZ_AABM02000006.1"/>
</dbReference>
<dbReference type="SMR" id="B3DT80"/>
<dbReference type="KEGG" id="blj:BLD_0903"/>
<dbReference type="HOGENOM" id="CLU_055352_1_0_11"/>
<dbReference type="UniPathway" id="UPA00245"/>
<dbReference type="Proteomes" id="UP000002419">
    <property type="component" value="Chromosome"/>
</dbReference>
<dbReference type="GO" id="GO:0036381">
    <property type="term" value="F:pyridoxal 5'-phosphate synthase (glutamine hydrolysing) activity"/>
    <property type="evidence" value="ECO:0007669"/>
    <property type="project" value="UniProtKB-UniRule"/>
</dbReference>
<dbReference type="GO" id="GO:0006520">
    <property type="term" value="P:amino acid metabolic process"/>
    <property type="evidence" value="ECO:0007669"/>
    <property type="project" value="TreeGrafter"/>
</dbReference>
<dbReference type="GO" id="GO:0042823">
    <property type="term" value="P:pyridoxal phosphate biosynthetic process"/>
    <property type="evidence" value="ECO:0007669"/>
    <property type="project" value="UniProtKB-UniRule"/>
</dbReference>
<dbReference type="GO" id="GO:0008615">
    <property type="term" value="P:pyridoxine biosynthetic process"/>
    <property type="evidence" value="ECO:0007669"/>
    <property type="project" value="TreeGrafter"/>
</dbReference>
<dbReference type="CDD" id="cd04727">
    <property type="entry name" value="pdxS"/>
    <property type="match status" value="1"/>
</dbReference>
<dbReference type="FunFam" id="3.20.20.70:FF:000001">
    <property type="entry name" value="Pyridoxine biosynthesis protein PDX1"/>
    <property type="match status" value="1"/>
</dbReference>
<dbReference type="Gene3D" id="3.20.20.70">
    <property type="entry name" value="Aldolase class I"/>
    <property type="match status" value="1"/>
</dbReference>
<dbReference type="HAMAP" id="MF_01824">
    <property type="entry name" value="PdxS"/>
    <property type="match status" value="1"/>
</dbReference>
<dbReference type="InterPro" id="IPR013785">
    <property type="entry name" value="Aldolase_TIM"/>
</dbReference>
<dbReference type="InterPro" id="IPR001852">
    <property type="entry name" value="PdxS/SNZ"/>
</dbReference>
<dbReference type="InterPro" id="IPR033755">
    <property type="entry name" value="PdxS/SNZ_N"/>
</dbReference>
<dbReference type="InterPro" id="IPR011060">
    <property type="entry name" value="RibuloseP-bd_barrel"/>
</dbReference>
<dbReference type="NCBIfam" id="NF003215">
    <property type="entry name" value="PRK04180.1"/>
    <property type="match status" value="1"/>
</dbReference>
<dbReference type="NCBIfam" id="TIGR00343">
    <property type="entry name" value="pyridoxal 5'-phosphate synthase lyase subunit PdxS"/>
    <property type="match status" value="1"/>
</dbReference>
<dbReference type="PANTHER" id="PTHR31829">
    <property type="entry name" value="PYRIDOXAL 5'-PHOSPHATE SYNTHASE SUBUNIT SNZ1-RELATED"/>
    <property type="match status" value="1"/>
</dbReference>
<dbReference type="PANTHER" id="PTHR31829:SF0">
    <property type="entry name" value="PYRIDOXAL 5'-PHOSPHATE SYNTHASE SUBUNIT SNZ1-RELATED"/>
    <property type="match status" value="1"/>
</dbReference>
<dbReference type="Pfam" id="PF01680">
    <property type="entry name" value="SOR_SNZ"/>
    <property type="match status" value="1"/>
</dbReference>
<dbReference type="PIRSF" id="PIRSF029271">
    <property type="entry name" value="Pdx1"/>
    <property type="match status" value="1"/>
</dbReference>
<dbReference type="SUPFAM" id="SSF51366">
    <property type="entry name" value="Ribulose-phoshate binding barrel"/>
    <property type="match status" value="1"/>
</dbReference>
<dbReference type="PROSITE" id="PS01235">
    <property type="entry name" value="PDXS_SNZ_1"/>
    <property type="match status" value="1"/>
</dbReference>
<dbReference type="PROSITE" id="PS51129">
    <property type="entry name" value="PDXS_SNZ_2"/>
    <property type="match status" value="1"/>
</dbReference>
<gene>
    <name evidence="1" type="primary">pdxS</name>
    <name type="ordered locus">BLD_0903</name>
</gene>
<comment type="function">
    <text evidence="1">Catalyzes the formation of pyridoxal 5'-phosphate from ribose 5-phosphate (RBP), glyceraldehyde 3-phosphate (G3P) and ammonia. The ammonia is provided by the PdxT subunit. Can also use ribulose 5-phosphate and dihydroxyacetone phosphate as substrates, resulting from enzyme-catalyzed isomerization of RBP and G3P, respectively.</text>
</comment>
<comment type="catalytic activity">
    <reaction evidence="1">
        <text>aldehydo-D-ribose 5-phosphate + D-glyceraldehyde 3-phosphate + L-glutamine = pyridoxal 5'-phosphate + L-glutamate + phosphate + 3 H2O + H(+)</text>
        <dbReference type="Rhea" id="RHEA:31507"/>
        <dbReference type="ChEBI" id="CHEBI:15377"/>
        <dbReference type="ChEBI" id="CHEBI:15378"/>
        <dbReference type="ChEBI" id="CHEBI:29985"/>
        <dbReference type="ChEBI" id="CHEBI:43474"/>
        <dbReference type="ChEBI" id="CHEBI:58273"/>
        <dbReference type="ChEBI" id="CHEBI:58359"/>
        <dbReference type="ChEBI" id="CHEBI:59776"/>
        <dbReference type="ChEBI" id="CHEBI:597326"/>
        <dbReference type="EC" id="4.3.3.6"/>
    </reaction>
</comment>
<comment type="pathway">
    <text evidence="1">Cofactor biosynthesis; pyridoxal 5'-phosphate biosynthesis.</text>
</comment>
<comment type="subunit">
    <text evidence="1">In the presence of PdxT, forms a dodecamer of heterodimers.</text>
</comment>
<comment type="similarity">
    <text evidence="1">Belongs to the PdxS/SNZ family.</text>
</comment>
<organism>
    <name type="scientific">Bifidobacterium longum (strain DJO10A)</name>
    <dbReference type="NCBI Taxonomy" id="205913"/>
    <lineage>
        <taxon>Bacteria</taxon>
        <taxon>Bacillati</taxon>
        <taxon>Actinomycetota</taxon>
        <taxon>Actinomycetes</taxon>
        <taxon>Bifidobacteriales</taxon>
        <taxon>Bifidobacteriaceae</taxon>
        <taxon>Bifidobacterium</taxon>
    </lineage>
</organism>
<name>PDXS_BIFLD</name>
<keyword id="KW-0456">Lyase</keyword>
<keyword id="KW-0663">Pyridoxal phosphate</keyword>
<keyword id="KW-0704">Schiff base</keyword>
<feature type="chain" id="PRO_1000188214" description="Pyridoxal 5'-phosphate synthase subunit PdxS">
    <location>
        <begin position="1"/>
        <end position="291"/>
    </location>
</feature>
<feature type="active site" description="Schiff-base intermediate with D-ribose 5-phosphate" evidence="1">
    <location>
        <position position="80"/>
    </location>
</feature>
<feature type="binding site" evidence="1">
    <location>
        <position position="23"/>
    </location>
    <ligand>
        <name>D-ribose 5-phosphate</name>
        <dbReference type="ChEBI" id="CHEBI:78346"/>
    </ligand>
</feature>
<feature type="binding site" evidence="1">
    <location>
        <position position="152"/>
    </location>
    <ligand>
        <name>D-ribose 5-phosphate</name>
        <dbReference type="ChEBI" id="CHEBI:78346"/>
    </ligand>
</feature>
<feature type="binding site" evidence="1">
    <location>
        <position position="164"/>
    </location>
    <ligand>
        <name>D-glyceraldehyde 3-phosphate</name>
        <dbReference type="ChEBI" id="CHEBI:59776"/>
    </ligand>
</feature>
<feature type="binding site" evidence="1">
    <location>
        <position position="213"/>
    </location>
    <ligand>
        <name>D-ribose 5-phosphate</name>
        <dbReference type="ChEBI" id="CHEBI:78346"/>
    </ligand>
</feature>
<feature type="binding site" evidence="1">
    <location>
        <begin position="234"/>
        <end position="235"/>
    </location>
    <ligand>
        <name>D-ribose 5-phosphate</name>
        <dbReference type="ChEBI" id="CHEBI:78346"/>
    </ligand>
</feature>